<proteinExistence type="inferred from homology"/>
<feature type="chain" id="PRO_0000227648" description="Undecaprenyl-diphosphatase">
    <location>
        <begin position="1"/>
        <end position="265"/>
    </location>
</feature>
<feature type="transmembrane region" description="Helical" evidence="1">
    <location>
        <begin position="38"/>
        <end position="58"/>
    </location>
</feature>
<feature type="transmembrane region" description="Helical" evidence="1">
    <location>
        <begin position="75"/>
        <end position="95"/>
    </location>
</feature>
<feature type="transmembrane region" description="Helical" evidence="1">
    <location>
        <begin position="108"/>
        <end position="128"/>
    </location>
</feature>
<feature type="transmembrane region" description="Helical" evidence="1">
    <location>
        <begin position="135"/>
        <end position="155"/>
    </location>
</feature>
<feature type="transmembrane region" description="Helical" evidence="1">
    <location>
        <begin position="181"/>
        <end position="201"/>
    </location>
</feature>
<feature type="transmembrane region" description="Helical" evidence="1">
    <location>
        <begin position="215"/>
        <end position="235"/>
    </location>
</feature>
<feature type="transmembrane region" description="Helical" evidence="1">
    <location>
        <begin position="244"/>
        <end position="264"/>
    </location>
</feature>
<sequence length="265" mass="28524">MSDLISALLLGILEGLTEFLPISSTGHLLIAEQWLGRRSDFFNIVIQAGAILAICLALRQRLWSLATGLGERANRDYVLKVGVAFLVTAVVGLIVRKAGWQLPETLQPVAWALLIGGVWMLVAEHFAGKLPERDVVTWKVAIAVGLAQVVAGVFPGTSRSASTIFIAMLLGLSKRSAAADFVFMVGIPTMFAASGYALLEMYKEGGFGTENWTDVAVAFVAATITGFVVVKWLLGYIKKHRFTVFAVYRMLLGAALLLWLPAAAG</sequence>
<comment type="function">
    <text evidence="1">Catalyzes the dephosphorylation of undecaprenyl diphosphate (UPP). Confers resistance to bacitracin.</text>
</comment>
<comment type="catalytic activity">
    <reaction evidence="1">
        <text>di-trans,octa-cis-undecaprenyl diphosphate + H2O = di-trans,octa-cis-undecaprenyl phosphate + phosphate + H(+)</text>
        <dbReference type="Rhea" id="RHEA:28094"/>
        <dbReference type="ChEBI" id="CHEBI:15377"/>
        <dbReference type="ChEBI" id="CHEBI:15378"/>
        <dbReference type="ChEBI" id="CHEBI:43474"/>
        <dbReference type="ChEBI" id="CHEBI:58405"/>
        <dbReference type="ChEBI" id="CHEBI:60392"/>
        <dbReference type="EC" id="3.6.1.27"/>
    </reaction>
</comment>
<comment type="subcellular location">
    <subcellularLocation>
        <location evidence="1">Cell inner membrane</location>
        <topology evidence="1">Multi-pass membrane protein</topology>
    </subcellularLocation>
</comment>
<comment type="miscellaneous">
    <text>Bacitracin is thought to be involved in the inhibition of peptidoglycan synthesis by sequestering undecaprenyl diphosphate, thereby reducing the pool of lipid carrier available.</text>
</comment>
<comment type="similarity">
    <text evidence="1">Belongs to the UppP family.</text>
</comment>
<reference key="1">
    <citation type="journal article" date="2005" name="J. Bacteriol.">
        <title>Insights into genome plasticity and pathogenicity of the plant pathogenic Bacterium Xanthomonas campestris pv. vesicatoria revealed by the complete genome sequence.</title>
        <authorList>
            <person name="Thieme F."/>
            <person name="Koebnik R."/>
            <person name="Bekel T."/>
            <person name="Berger C."/>
            <person name="Boch J."/>
            <person name="Buettner D."/>
            <person name="Caldana C."/>
            <person name="Gaigalat L."/>
            <person name="Goesmann A."/>
            <person name="Kay S."/>
            <person name="Kirchner O."/>
            <person name="Lanz C."/>
            <person name="Linke B."/>
            <person name="McHardy A.C."/>
            <person name="Meyer F."/>
            <person name="Mittenhuber G."/>
            <person name="Nies D.H."/>
            <person name="Niesbach-Kloesgen U."/>
            <person name="Patschkowski T."/>
            <person name="Rueckert C."/>
            <person name="Rupp O."/>
            <person name="Schneiker S."/>
            <person name="Schuster S.C."/>
            <person name="Vorhoelter F.J."/>
            <person name="Weber E."/>
            <person name="Puehler A."/>
            <person name="Bonas U."/>
            <person name="Bartels D."/>
            <person name="Kaiser O."/>
        </authorList>
    </citation>
    <scope>NUCLEOTIDE SEQUENCE [LARGE SCALE GENOMIC DNA]</scope>
    <source>
        <strain>85-10</strain>
    </source>
</reference>
<name>UPPP_XANE5</name>
<keyword id="KW-0046">Antibiotic resistance</keyword>
<keyword id="KW-0997">Cell inner membrane</keyword>
<keyword id="KW-1003">Cell membrane</keyword>
<keyword id="KW-0133">Cell shape</keyword>
<keyword id="KW-0961">Cell wall biogenesis/degradation</keyword>
<keyword id="KW-0378">Hydrolase</keyword>
<keyword id="KW-0472">Membrane</keyword>
<keyword id="KW-0573">Peptidoglycan synthesis</keyword>
<keyword id="KW-0812">Transmembrane</keyword>
<keyword id="KW-1133">Transmembrane helix</keyword>
<evidence type="ECO:0000255" key="1">
    <source>
        <dbReference type="HAMAP-Rule" id="MF_01006"/>
    </source>
</evidence>
<accession>Q3BZ95</accession>
<organism>
    <name type="scientific">Xanthomonas euvesicatoria pv. vesicatoria (strain 85-10)</name>
    <name type="common">Xanthomonas campestris pv. vesicatoria</name>
    <dbReference type="NCBI Taxonomy" id="316273"/>
    <lineage>
        <taxon>Bacteria</taxon>
        <taxon>Pseudomonadati</taxon>
        <taxon>Pseudomonadota</taxon>
        <taxon>Gammaproteobacteria</taxon>
        <taxon>Lysobacterales</taxon>
        <taxon>Lysobacteraceae</taxon>
        <taxon>Xanthomonas</taxon>
    </lineage>
</organism>
<gene>
    <name evidence="1" type="primary">uppP</name>
    <name type="synonym">bacA</name>
    <name type="ordered locus">XCV0187</name>
</gene>
<protein>
    <recommendedName>
        <fullName evidence="1">Undecaprenyl-diphosphatase</fullName>
        <ecNumber evidence="1">3.6.1.27</ecNumber>
    </recommendedName>
    <alternativeName>
        <fullName evidence="1">Bacitracin resistance protein</fullName>
    </alternativeName>
    <alternativeName>
        <fullName evidence="1">Undecaprenyl pyrophosphate phosphatase</fullName>
    </alternativeName>
</protein>
<dbReference type="EC" id="3.6.1.27" evidence="1"/>
<dbReference type="EMBL" id="AM039952">
    <property type="protein sequence ID" value="CAJ21818.1"/>
    <property type="molecule type" value="Genomic_DNA"/>
</dbReference>
<dbReference type="RefSeq" id="WP_007968085.1">
    <property type="nucleotide sequence ID" value="NZ_CP017190.1"/>
</dbReference>
<dbReference type="SMR" id="Q3BZ95"/>
<dbReference type="STRING" id="456327.BJD11_21995"/>
<dbReference type="KEGG" id="xcv:XCV0187"/>
<dbReference type="eggNOG" id="COG1968">
    <property type="taxonomic scope" value="Bacteria"/>
</dbReference>
<dbReference type="HOGENOM" id="CLU_060296_2_0_6"/>
<dbReference type="Proteomes" id="UP000007069">
    <property type="component" value="Chromosome"/>
</dbReference>
<dbReference type="GO" id="GO:0005886">
    <property type="term" value="C:plasma membrane"/>
    <property type="evidence" value="ECO:0007669"/>
    <property type="project" value="UniProtKB-SubCell"/>
</dbReference>
<dbReference type="GO" id="GO:0050380">
    <property type="term" value="F:undecaprenyl-diphosphatase activity"/>
    <property type="evidence" value="ECO:0007669"/>
    <property type="project" value="UniProtKB-UniRule"/>
</dbReference>
<dbReference type="GO" id="GO:0071555">
    <property type="term" value="P:cell wall organization"/>
    <property type="evidence" value="ECO:0007669"/>
    <property type="project" value="UniProtKB-KW"/>
</dbReference>
<dbReference type="GO" id="GO:0009252">
    <property type="term" value="P:peptidoglycan biosynthetic process"/>
    <property type="evidence" value="ECO:0007669"/>
    <property type="project" value="UniProtKB-KW"/>
</dbReference>
<dbReference type="GO" id="GO:0008360">
    <property type="term" value="P:regulation of cell shape"/>
    <property type="evidence" value="ECO:0007669"/>
    <property type="project" value="UniProtKB-KW"/>
</dbReference>
<dbReference type="GO" id="GO:0046677">
    <property type="term" value="P:response to antibiotic"/>
    <property type="evidence" value="ECO:0007669"/>
    <property type="project" value="UniProtKB-UniRule"/>
</dbReference>
<dbReference type="HAMAP" id="MF_01006">
    <property type="entry name" value="Undec_diphosphatase"/>
    <property type="match status" value="1"/>
</dbReference>
<dbReference type="InterPro" id="IPR003824">
    <property type="entry name" value="UppP"/>
</dbReference>
<dbReference type="NCBIfam" id="NF001390">
    <property type="entry name" value="PRK00281.1-4"/>
    <property type="match status" value="1"/>
</dbReference>
<dbReference type="PANTHER" id="PTHR30622">
    <property type="entry name" value="UNDECAPRENYL-DIPHOSPHATASE"/>
    <property type="match status" value="1"/>
</dbReference>
<dbReference type="PANTHER" id="PTHR30622:SF3">
    <property type="entry name" value="UNDECAPRENYL-DIPHOSPHATASE"/>
    <property type="match status" value="1"/>
</dbReference>
<dbReference type="Pfam" id="PF02673">
    <property type="entry name" value="BacA"/>
    <property type="match status" value="1"/>
</dbReference>